<sequence length="125" mass="13898">MPTINQLVRKPRVSEVVKSKSPALENCPQRRGVCTRVYTTTPKKPNSALRKVAKVRLTNGFEVISYIGGEGHNLQEHSVVLIRGGRVKDLPGVRYHIVRGSLDLQGVKDRKQARSKYGAKRPKAA</sequence>
<keyword id="KW-0488">Methylation</keyword>
<keyword id="KW-1185">Reference proteome</keyword>
<keyword id="KW-0687">Ribonucleoprotein</keyword>
<keyword id="KW-0689">Ribosomal protein</keyword>
<keyword id="KW-0694">RNA-binding</keyword>
<keyword id="KW-0699">rRNA-binding</keyword>
<keyword id="KW-0820">tRNA-binding</keyword>
<protein>
    <recommendedName>
        <fullName evidence="2">Small ribosomal subunit protein uS12</fullName>
    </recommendedName>
    <alternativeName>
        <fullName evidence="3">30S ribosomal protein S12</fullName>
    </alternativeName>
</protein>
<reference key="1">
    <citation type="journal article" date="2006" name="Nat. Biotechnol.">
        <title>Genome sequence of the bioplastic-producing 'Knallgas' bacterium Ralstonia eutropha H16.</title>
        <authorList>
            <person name="Pohlmann A."/>
            <person name="Fricke W.F."/>
            <person name="Reinecke F."/>
            <person name="Kusian B."/>
            <person name="Liesegang H."/>
            <person name="Cramm R."/>
            <person name="Eitinger T."/>
            <person name="Ewering C."/>
            <person name="Poetter M."/>
            <person name="Schwartz E."/>
            <person name="Strittmatter A."/>
            <person name="Voss I."/>
            <person name="Gottschalk G."/>
            <person name="Steinbuechel A."/>
            <person name="Friedrich B."/>
            <person name="Bowien B."/>
        </authorList>
    </citation>
    <scope>NUCLEOTIDE SEQUENCE [LARGE SCALE GENOMIC DNA]</scope>
    <source>
        <strain>ATCC 17699 / DSM 428 / KCTC 22496 / NCIMB 10442 / H16 / Stanier 337</strain>
    </source>
</reference>
<name>RS12_CUPNH</name>
<proteinExistence type="inferred from homology"/>
<evidence type="ECO:0000250" key="1"/>
<evidence type="ECO:0000255" key="2">
    <source>
        <dbReference type="HAMAP-Rule" id="MF_00403"/>
    </source>
</evidence>
<evidence type="ECO:0000305" key="3"/>
<feature type="chain" id="PRO_0000296022" description="Small ribosomal subunit protein uS12">
    <location>
        <begin position="1"/>
        <end position="125"/>
    </location>
</feature>
<feature type="modified residue" description="3-methylthioaspartic acid" evidence="1">
    <location>
        <position position="89"/>
    </location>
</feature>
<dbReference type="EMBL" id="AM260479">
    <property type="protein sequence ID" value="CAJ94562.1"/>
    <property type="molecule type" value="Genomic_DNA"/>
</dbReference>
<dbReference type="RefSeq" id="WP_010810460.1">
    <property type="nucleotide sequence ID" value="NZ_CP039287.1"/>
</dbReference>
<dbReference type="SMR" id="Q0K609"/>
<dbReference type="STRING" id="381666.H16_A3494"/>
<dbReference type="GeneID" id="98344297"/>
<dbReference type="KEGG" id="reh:H16_A3494"/>
<dbReference type="eggNOG" id="COG0048">
    <property type="taxonomic scope" value="Bacteria"/>
</dbReference>
<dbReference type="HOGENOM" id="CLU_104295_1_2_4"/>
<dbReference type="OrthoDB" id="9802366at2"/>
<dbReference type="Proteomes" id="UP000008210">
    <property type="component" value="Chromosome 1"/>
</dbReference>
<dbReference type="GO" id="GO:0015935">
    <property type="term" value="C:small ribosomal subunit"/>
    <property type="evidence" value="ECO:0007669"/>
    <property type="project" value="InterPro"/>
</dbReference>
<dbReference type="GO" id="GO:0019843">
    <property type="term" value="F:rRNA binding"/>
    <property type="evidence" value="ECO:0007669"/>
    <property type="project" value="UniProtKB-UniRule"/>
</dbReference>
<dbReference type="GO" id="GO:0003735">
    <property type="term" value="F:structural constituent of ribosome"/>
    <property type="evidence" value="ECO:0007669"/>
    <property type="project" value="InterPro"/>
</dbReference>
<dbReference type="GO" id="GO:0000049">
    <property type="term" value="F:tRNA binding"/>
    <property type="evidence" value="ECO:0007669"/>
    <property type="project" value="UniProtKB-UniRule"/>
</dbReference>
<dbReference type="GO" id="GO:0006412">
    <property type="term" value="P:translation"/>
    <property type="evidence" value="ECO:0007669"/>
    <property type="project" value="UniProtKB-UniRule"/>
</dbReference>
<dbReference type="CDD" id="cd03368">
    <property type="entry name" value="Ribosomal_S12"/>
    <property type="match status" value="1"/>
</dbReference>
<dbReference type="FunFam" id="2.40.50.140:FF:000001">
    <property type="entry name" value="30S ribosomal protein S12"/>
    <property type="match status" value="1"/>
</dbReference>
<dbReference type="Gene3D" id="2.40.50.140">
    <property type="entry name" value="Nucleic acid-binding proteins"/>
    <property type="match status" value="1"/>
</dbReference>
<dbReference type="HAMAP" id="MF_00403_B">
    <property type="entry name" value="Ribosomal_uS12_B"/>
    <property type="match status" value="1"/>
</dbReference>
<dbReference type="InterPro" id="IPR012340">
    <property type="entry name" value="NA-bd_OB-fold"/>
</dbReference>
<dbReference type="InterPro" id="IPR006032">
    <property type="entry name" value="Ribosomal_uS12"/>
</dbReference>
<dbReference type="InterPro" id="IPR005679">
    <property type="entry name" value="Ribosomal_uS12_bac"/>
</dbReference>
<dbReference type="NCBIfam" id="TIGR00981">
    <property type="entry name" value="rpsL_bact"/>
    <property type="match status" value="1"/>
</dbReference>
<dbReference type="PANTHER" id="PTHR11652">
    <property type="entry name" value="30S RIBOSOMAL PROTEIN S12 FAMILY MEMBER"/>
    <property type="match status" value="1"/>
</dbReference>
<dbReference type="Pfam" id="PF00164">
    <property type="entry name" value="Ribosom_S12_S23"/>
    <property type="match status" value="1"/>
</dbReference>
<dbReference type="PIRSF" id="PIRSF002133">
    <property type="entry name" value="Ribosomal_S12/S23"/>
    <property type="match status" value="1"/>
</dbReference>
<dbReference type="PRINTS" id="PR01034">
    <property type="entry name" value="RIBOSOMALS12"/>
</dbReference>
<dbReference type="SUPFAM" id="SSF50249">
    <property type="entry name" value="Nucleic acid-binding proteins"/>
    <property type="match status" value="1"/>
</dbReference>
<dbReference type="PROSITE" id="PS00055">
    <property type="entry name" value="RIBOSOMAL_S12"/>
    <property type="match status" value="1"/>
</dbReference>
<organism>
    <name type="scientific">Cupriavidus necator (strain ATCC 17699 / DSM 428 / KCTC 22496 / NCIMB 10442 / H16 / Stanier 337)</name>
    <name type="common">Ralstonia eutropha</name>
    <dbReference type="NCBI Taxonomy" id="381666"/>
    <lineage>
        <taxon>Bacteria</taxon>
        <taxon>Pseudomonadati</taxon>
        <taxon>Pseudomonadota</taxon>
        <taxon>Betaproteobacteria</taxon>
        <taxon>Burkholderiales</taxon>
        <taxon>Burkholderiaceae</taxon>
        <taxon>Cupriavidus</taxon>
    </lineage>
</organism>
<accession>Q0K609</accession>
<comment type="function">
    <text evidence="2">With S4 and S5 plays an important role in translational accuracy.</text>
</comment>
<comment type="function">
    <text evidence="2">Interacts with and stabilizes bases of the 16S rRNA that are involved in tRNA selection in the A site and with the mRNA backbone. Located at the interface of the 30S and 50S subunits, it traverses the body of the 30S subunit contacting proteins on the other side and probably holding the rRNA structure together. The combined cluster of proteins S8, S12 and S17 appears to hold together the shoulder and platform of the 30S subunit.</text>
</comment>
<comment type="subunit">
    <text evidence="2">Part of the 30S ribosomal subunit. Contacts proteins S8 and S17. May interact with IF1 in the 30S initiation complex.</text>
</comment>
<comment type="similarity">
    <text evidence="2">Belongs to the universal ribosomal protein uS12 family.</text>
</comment>
<gene>
    <name evidence="2" type="primary">rpsL</name>
    <name type="ordered locus">H16_A3494</name>
</gene>